<name>RL10_HAMD5</name>
<proteinExistence type="inferred from homology"/>
<feature type="chain" id="PRO_1000205444" description="Large ribosomal subunit protein uL10">
    <location>
        <begin position="1"/>
        <end position="165"/>
    </location>
</feature>
<keyword id="KW-0687">Ribonucleoprotein</keyword>
<keyword id="KW-0689">Ribosomal protein</keyword>
<keyword id="KW-0694">RNA-binding</keyword>
<keyword id="KW-0699">rRNA-binding</keyword>
<organism>
    <name type="scientific">Hamiltonella defensa subsp. Acyrthosiphon pisum (strain 5AT)</name>
    <dbReference type="NCBI Taxonomy" id="572265"/>
    <lineage>
        <taxon>Bacteria</taxon>
        <taxon>Pseudomonadati</taxon>
        <taxon>Pseudomonadota</taxon>
        <taxon>Gammaproteobacteria</taxon>
        <taxon>Enterobacterales</taxon>
        <taxon>Enterobacteriaceae</taxon>
        <taxon>aphid secondary symbionts</taxon>
        <taxon>Candidatus Hamiltonella</taxon>
    </lineage>
</organism>
<accession>C4K4F3</accession>
<reference key="1">
    <citation type="journal article" date="2009" name="Proc. Natl. Acad. Sci. U.S.A.">
        <title>Hamiltonella defensa, genome evolution of protective bacterial endosymbiont from pathogenic ancestors.</title>
        <authorList>
            <person name="Degnan P.H."/>
            <person name="Yu Y."/>
            <person name="Sisneros N."/>
            <person name="Wing R.A."/>
            <person name="Moran N.A."/>
        </authorList>
    </citation>
    <scope>NUCLEOTIDE SEQUENCE [LARGE SCALE GENOMIC DNA]</scope>
    <source>
        <strain>5AT</strain>
    </source>
</reference>
<protein>
    <recommendedName>
        <fullName evidence="1">Large ribosomal subunit protein uL10</fullName>
    </recommendedName>
    <alternativeName>
        <fullName evidence="2">50S ribosomal protein L10</fullName>
    </alternativeName>
</protein>
<gene>
    <name evidence="1" type="primary">rplJ</name>
    <name type="ordered locus">HDEF_0713</name>
</gene>
<dbReference type="EMBL" id="CP001277">
    <property type="protein sequence ID" value="ACQ67446.1"/>
    <property type="molecule type" value="Genomic_DNA"/>
</dbReference>
<dbReference type="RefSeq" id="WP_015873267.1">
    <property type="nucleotide sequence ID" value="NC_012751.1"/>
</dbReference>
<dbReference type="STRING" id="572265.HDEF_0713"/>
<dbReference type="GeneID" id="66260566"/>
<dbReference type="KEGG" id="hde:HDEF_0713"/>
<dbReference type="eggNOG" id="COG0244">
    <property type="taxonomic scope" value="Bacteria"/>
</dbReference>
<dbReference type="HOGENOM" id="CLU_092227_0_2_6"/>
<dbReference type="Proteomes" id="UP000002334">
    <property type="component" value="Chromosome"/>
</dbReference>
<dbReference type="GO" id="GO:0015934">
    <property type="term" value="C:large ribosomal subunit"/>
    <property type="evidence" value="ECO:0007669"/>
    <property type="project" value="InterPro"/>
</dbReference>
<dbReference type="GO" id="GO:0070180">
    <property type="term" value="F:large ribosomal subunit rRNA binding"/>
    <property type="evidence" value="ECO:0007669"/>
    <property type="project" value="UniProtKB-UniRule"/>
</dbReference>
<dbReference type="GO" id="GO:0003735">
    <property type="term" value="F:structural constituent of ribosome"/>
    <property type="evidence" value="ECO:0007669"/>
    <property type="project" value="InterPro"/>
</dbReference>
<dbReference type="GO" id="GO:0006412">
    <property type="term" value="P:translation"/>
    <property type="evidence" value="ECO:0007669"/>
    <property type="project" value="UniProtKB-UniRule"/>
</dbReference>
<dbReference type="CDD" id="cd05797">
    <property type="entry name" value="Ribosomal_L10"/>
    <property type="match status" value="1"/>
</dbReference>
<dbReference type="FunFam" id="3.30.70.1730:FF:000001">
    <property type="entry name" value="50S ribosomal protein L10"/>
    <property type="match status" value="1"/>
</dbReference>
<dbReference type="Gene3D" id="3.30.70.1730">
    <property type="match status" value="1"/>
</dbReference>
<dbReference type="Gene3D" id="6.10.250.2350">
    <property type="match status" value="1"/>
</dbReference>
<dbReference type="HAMAP" id="MF_00362">
    <property type="entry name" value="Ribosomal_uL10"/>
    <property type="match status" value="1"/>
</dbReference>
<dbReference type="InterPro" id="IPR001790">
    <property type="entry name" value="Ribosomal_uL10"/>
</dbReference>
<dbReference type="InterPro" id="IPR043141">
    <property type="entry name" value="Ribosomal_uL10-like_sf"/>
</dbReference>
<dbReference type="InterPro" id="IPR022973">
    <property type="entry name" value="Ribosomal_uL10_bac"/>
</dbReference>
<dbReference type="InterPro" id="IPR047865">
    <property type="entry name" value="Ribosomal_uL10_bac_type"/>
</dbReference>
<dbReference type="InterPro" id="IPR002363">
    <property type="entry name" value="Ribosomal_uL10_CS_bac"/>
</dbReference>
<dbReference type="NCBIfam" id="NF000955">
    <property type="entry name" value="PRK00099.1-1"/>
    <property type="match status" value="1"/>
</dbReference>
<dbReference type="PANTHER" id="PTHR11560">
    <property type="entry name" value="39S RIBOSOMAL PROTEIN L10, MITOCHONDRIAL"/>
    <property type="match status" value="1"/>
</dbReference>
<dbReference type="Pfam" id="PF00466">
    <property type="entry name" value="Ribosomal_L10"/>
    <property type="match status" value="1"/>
</dbReference>
<dbReference type="SUPFAM" id="SSF160369">
    <property type="entry name" value="Ribosomal protein L10-like"/>
    <property type="match status" value="1"/>
</dbReference>
<dbReference type="PROSITE" id="PS01109">
    <property type="entry name" value="RIBOSOMAL_L10"/>
    <property type="match status" value="1"/>
</dbReference>
<comment type="function">
    <text evidence="1">Forms part of the ribosomal stalk, playing a central role in the interaction of the ribosome with GTP-bound translation factors.</text>
</comment>
<comment type="subunit">
    <text evidence="1">Part of the ribosomal stalk of the 50S ribosomal subunit. The N-terminus interacts with L11 and the large rRNA to form the base of the stalk. The C-terminus forms an elongated spine to which L12 dimers bind in a sequential fashion forming a multimeric L10(L12)X complex.</text>
</comment>
<comment type="similarity">
    <text evidence="1">Belongs to the universal ribosomal protein uL10 family.</text>
</comment>
<evidence type="ECO:0000255" key="1">
    <source>
        <dbReference type="HAMAP-Rule" id="MF_00362"/>
    </source>
</evidence>
<evidence type="ECO:0000305" key="2"/>
<sequence>MPLNLQDKKAIVDEVKEIAKGALSAVVADTRGVTVAKMTGLRKAAREAGVYMRVVRNTLMRRVVFSTDFECLQDTFVGPTLIAFSTEHPGAAARLFKEFAKLNKEFEIKAAAFEGTLIPVSDIDRLATLPTYEEAIARLMATLKEASVGKLVRTLAALKAKREAI</sequence>